<protein>
    <recommendedName>
        <fullName>Non-structural polyprotein p200</fullName>
        <shortName>p200</shortName>
    </recommendedName>
    <component>
        <recommendedName>
            <fullName>Protease/methyltransferase p150</fullName>
            <shortName>p150</shortName>
            <ecNumber>3.4.22.-</ecNumber>
        </recommendedName>
    </component>
    <component>
        <recommendedName>
            <fullName>RNA-directed RNA polymerase p90</fullName>
            <shortName>p90</shortName>
            <ecNumber evidence="4">2.7.7.48</ecNumber>
            <ecNumber>3.6.1.15</ecNumber>
            <ecNumber>3.6.4.13</ecNumber>
        </recommendedName>
    </component>
</protein>
<name>POLN_RUBVB</name>
<dbReference type="EC" id="3.4.22.-"/>
<dbReference type="EC" id="2.7.7.48" evidence="4"/>
<dbReference type="EC" id="3.6.1.15"/>
<dbReference type="EC" id="3.6.4.13"/>
<dbReference type="EMBL" id="AY258322">
    <property type="protein sequence ID" value="AAP82232.1"/>
    <property type="molecule type" value="Genomic_RNA"/>
</dbReference>
<dbReference type="SMR" id="Q6X2U4"/>
<dbReference type="MEROPS" id="C27.001"/>
<dbReference type="Proteomes" id="UP000007185">
    <property type="component" value="Genome"/>
</dbReference>
<dbReference type="GO" id="GO:0033644">
    <property type="term" value="C:host cell membrane"/>
    <property type="evidence" value="ECO:0007669"/>
    <property type="project" value="UniProtKB-SubCell"/>
</dbReference>
<dbReference type="GO" id="GO:0044220">
    <property type="term" value="C:host cell perinuclear region of cytoplasm"/>
    <property type="evidence" value="ECO:0007669"/>
    <property type="project" value="UniProtKB-SubCell"/>
</dbReference>
<dbReference type="GO" id="GO:0016020">
    <property type="term" value="C:membrane"/>
    <property type="evidence" value="ECO:0007669"/>
    <property type="project" value="UniProtKB-KW"/>
</dbReference>
<dbReference type="GO" id="GO:0005524">
    <property type="term" value="F:ATP binding"/>
    <property type="evidence" value="ECO:0007669"/>
    <property type="project" value="UniProtKB-KW"/>
</dbReference>
<dbReference type="GO" id="GO:0016887">
    <property type="term" value="F:ATP hydrolysis activity"/>
    <property type="evidence" value="ECO:0007669"/>
    <property type="project" value="RHEA"/>
</dbReference>
<dbReference type="GO" id="GO:0004197">
    <property type="term" value="F:cysteine-type endopeptidase activity"/>
    <property type="evidence" value="ECO:0007669"/>
    <property type="project" value="InterPro"/>
</dbReference>
<dbReference type="GO" id="GO:0046872">
    <property type="term" value="F:metal ion binding"/>
    <property type="evidence" value="ECO:0007669"/>
    <property type="project" value="UniProtKB-KW"/>
</dbReference>
<dbReference type="GO" id="GO:0008174">
    <property type="term" value="F:mRNA methyltransferase activity"/>
    <property type="evidence" value="ECO:0007669"/>
    <property type="project" value="InterPro"/>
</dbReference>
<dbReference type="GO" id="GO:0003723">
    <property type="term" value="F:RNA binding"/>
    <property type="evidence" value="ECO:0007669"/>
    <property type="project" value="InterPro"/>
</dbReference>
<dbReference type="GO" id="GO:0003724">
    <property type="term" value="F:RNA helicase activity"/>
    <property type="evidence" value="ECO:0007669"/>
    <property type="project" value="UniProtKB-EC"/>
</dbReference>
<dbReference type="GO" id="GO:0003968">
    <property type="term" value="F:RNA-directed RNA polymerase activity"/>
    <property type="evidence" value="ECO:0007669"/>
    <property type="project" value="UniProtKB-KW"/>
</dbReference>
<dbReference type="GO" id="GO:0006351">
    <property type="term" value="P:DNA-templated transcription"/>
    <property type="evidence" value="ECO:0007669"/>
    <property type="project" value="InterPro"/>
</dbReference>
<dbReference type="GO" id="GO:0016556">
    <property type="term" value="P:mRNA modification"/>
    <property type="evidence" value="ECO:0007669"/>
    <property type="project" value="InterPro"/>
</dbReference>
<dbReference type="GO" id="GO:0006508">
    <property type="term" value="P:proteolysis"/>
    <property type="evidence" value="ECO:0007669"/>
    <property type="project" value="UniProtKB-KW"/>
</dbReference>
<dbReference type="GO" id="GO:0006396">
    <property type="term" value="P:RNA processing"/>
    <property type="evidence" value="ECO:0007669"/>
    <property type="project" value="InterPro"/>
</dbReference>
<dbReference type="GO" id="GO:0039694">
    <property type="term" value="P:viral RNA genome replication"/>
    <property type="evidence" value="ECO:0007669"/>
    <property type="project" value="InterPro"/>
</dbReference>
<dbReference type="CDD" id="cd21557">
    <property type="entry name" value="Macro_X_Nsp3-like"/>
    <property type="match status" value="1"/>
</dbReference>
<dbReference type="CDD" id="cd23260">
    <property type="entry name" value="Matonaviridae_RdRp"/>
    <property type="match status" value="1"/>
</dbReference>
<dbReference type="Gene3D" id="3.40.220.10">
    <property type="entry name" value="Leucine Aminopeptidase, subunit E, domain 1"/>
    <property type="match status" value="1"/>
</dbReference>
<dbReference type="Gene3D" id="3.40.50.300">
    <property type="entry name" value="P-loop containing nucleotide triphosphate hydrolases"/>
    <property type="match status" value="1"/>
</dbReference>
<dbReference type="InterPro" id="IPR027351">
    <property type="entry name" value="(+)RNA_virus_helicase_core_dom"/>
</dbReference>
<dbReference type="InterPro" id="IPR002588">
    <property type="entry name" value="Alphavirus-like_MT_dom"/>
</dbReference>
<dbReference type="InterPro" id="IPR043502">
    <property type="entry name" value="DNA/RNA_pol_sf"/>
</dbReference>
<dbReference type="InterPro" id="IPR002589">
    <property type="entry name" value="Macro_dom"/>
</dbReference>
<dbReference type="InterPro" id="IPR043472">
    <property type="entry name" value="Macro_dom-like"/>
</dbReference>
<dbReference type="InterPro" id="IPR044371">
    <property type="entry name" value="Macro_X_NSP3-like"/>
</dbReference>
<dbReference type="InterPro" id="IPR047306">
    <property type="entry name" value="Matonaviridae_RdRp"/>
</dbReference>
<dbReference type="InterPro" id="IPR027417">
    <property type="entry name" value="P-loop_NTPase"/>
</dbReference>
<dbReference type="InterPro" id="IPR008738">
    <property type="entry name" value="Peptidase_C27"/>
</dbReference>
<dbReference type="InterPro" id="IPR001788">
    <property type="entry name" value="RNA-dep_RNA_pol_alsuvir"/>
</dbReference>
<dbReference type="InterPro" id="IPR007094">
    <property type="entry name" value="RNA-dir_pol_PSvirus"/>
</dbReference>
<dbReference type="InterPro" id="IPR022245">
    <property type="entry name" value="Rubi_NSP_C"/>
</dbReference>
<dbReference type="InterPro" id="IPR044070">
    <property type="entry name" value="RUBV_NS_PRO"/>
</dbReference>
<dbReference type="PANTHER" id="PTHR11106">
    <property type="entry name" value="GANGLIOSIDE INDUCED DIFFERENTIATION ASSOCIATED PROTEIN 2-RELATED"/>
    <property type="match status" value="1"/>
</dbReference>
<dbReference type="PANTHER" id="PTHR11106:SF27">
    <property type="entry name" value="MACRO DOMAIN-CONTAINING PROTEIN"/>
    <property type="match status" value="1"/>
</dbReference>
<dbReference type="Pfam" id="PF01661">
    <property type="entry name" value="Macro"/>
    <property type="match status" value="1"/>
</dbReference>
<dbReference type="Pfam" id="PF05407">
    <property type="entry name" value="Peptidase_C27"/>
    <property type="match status" value="1"/>
</dbReference>
<dbReference type="Pfam" id="PF00978">
    <property type="entry name" value="RdRP_2"/>
    <property type="match status" value="1"/>
</dbReference>
<dbReference type="Pfam" id="PF12601">
    <property type="entry name" value="Rubi_NSP_C"/>
    <property type="match status" value="1"/>
</dbReference>
<dbReference type="Pfam" id="PF01443">
    <property type="entry name" value="Viral_helicase1"/>
    <property type="match status" value="1"/>
</dbReference>
<dbReference type="SMART" id="SM00506">
    <property type="entry name" value="A1pp"/>
    <property type="match status" value="1"/>
</dbReference>
<dbReference type="SUPFAM" id="SSF56672">
    <property type="entry name" value="DNA/RNA polymerases"/>
    <property type="match status" value="1"/>
</dbReference>
<dbReference type="SUPFAM" id="SSF52949">
    <property type="entry name" value="Macro domain-like"/>
    <property type="match status" value="1"/>
</dbReference>
<dbReference type="SUPFAM" id="SSF52540">
    <property type="entry name" value="P-loop containing nucleoside triphosphate hydrolases"/>
    <property type="match status" value="1"/>
</dbReference>
<dbReference type="PROSITE" id="PS51743">
    <property type="entry name" value="ALPHAVIRUS_MT"/>
    <property type="match status" value="1"/>
</dbReference>
<dbReference type="PROSITE" id="PS51154">
    <property type="entry name" value="MACRO"/>
    <property type="match status" value="1"/>
</dbReference>
<dbReference type="PROSITE" id="PS51657">
    <property type="entry name" value="PSRV_HELICASE"/>
    <property type="match status" value="1"/>
</dbReference>
<dbReference type="PROSITE" id="PS50507">
    <property type="entry name" value="RDRP_SSRNA_POS"/>
    <property type="match status" value="1"/>
</dbReference>
<dbReference type="PROSITE" id="PS51889">
    <property type="entry name" value="RUBV_NS_PRO"/>
    <property type="match status" value="1"/>
</dbReference>
<keyword id="KW-0067">ATP-binding</keyword>
<keyword id="KW-0106">Calcium</keyword>
<keyword id="KW-0347">Helicase</keyword>
<keyword id="KW-1035">Host cytoplasm</keyword>
<keyword id="KW-1043">Host membrane</keyword>
<keyword id="KW-0378">Hydrolase</keyword>
<keyword id="KW-0472">Membrane</keyword>
<keyword id="KW-0479">Metal-binding</keyword>
<keyword id="KW-0547">Nucleotide-binding</keyword>
<keyword id="KW-0548">Nucleotidyltransferase</keyword>
<keyword id="KW-0645">Protease</keyword>
<keyword id="KW-0696">RNA-directed RNA polymerase</keyword>
<keyword id="KW-0788">Thiol protease</keyword>
<keyword id="KW-0808">Transferase</keyword>
<keyword id="KW-0693">Viral RNA replication</keyword>
<keyword id="KW-0862">Zinc</keyword>
<reference key="1">
    <citation type="journal article" date="2003" name="Arch. Virol.">
        <title>Characterization of genotype II Rubella virus strains.</title>
        <authorList>
            <person name="Zheng D.-P."/>
            <person name="Zhou Y.M."/>
            <person name="Zhao K."/>
            <person name="Han Y.-R."/>
            <person name="Frey T.K."/>
        </authorList>
    </citation>
    <scope>NUCLEOTIDE SEQUENCE [GENOMIC RNA]</scope>
</reference>
<accession>Q6X2U4</accession>
<organismHost>
    <name type="scientific">Homo sapiens</name>
    <name type="common">Human</name>
    <dbReference type="NCBI Taxonomy" id="9606"/>
</organismHost>
<proteinExistence type="inferred from homology"/>
<evidence type="ECO:0000250" key="1">
    <source>
        <dbReference type="UniProtKB" id="P13889"/>
    </source>
</evidence>
<evidence type="ECO:0000250" key="2">
    <source>
        <dbReference type="UniProtKB" id="Q86500"/>
    </source>
</evidence>
<evidence type="ECO:0000255" key="3">
    <source>
        <dbReference type="PROSITE-ProRule" id="PRU00490"/>
    </source>
</evidence>
<evidence type="ECO:0000255" key="4">
    <source>
        <dbReference type="PROSITE-ProRule" id="PRU00539"/>
    </source>
</evidence>
<evidence type="ECO:0000255" key="5">
    <source>
        <dbReference type="PROSITE-ProRule" id="PRU00990"/>
    </source>
</evidence>
<evidence type="ECO:0000255" key="6">
    <source>
        <dbReference type="PROSITE-ProRule" id="PRU01079"/>
    </source>
</evidence>
<evidence type="ECO:0000255" key="7">
    <source>
        <dbReference type="PROSITE-ProRule" id="PRU01237"/>
    </source>
</evidence>
<evidence type="ECO:0000256" key="8">
    <source>
        <dbReference type="SAM" id="MobiDB-lite"/>
    </source>
</evidence>
<comment type="function">
    <molecule>Non-structural polyprotein p200</molecule>
    <text evidence="2">Probable principal replicase for the negative-strand DNA, which replicates the 40S (+) genomic RNA into (-) antigenomic RNA. It cannot replicate the (-) into (+) until cleaved into p150 and p90 mature proteins.</text>
</comment>
<comment type="function">
    <molecule>Protease/methyltransferase p150</molecule>
    <text evidence="2">Protease that cleaves the precursor polyprotein into two mature products. Together with RNA-directed RNA polymerase p90, replicates the 40S genomic and antigenomic RNA by recognizing replications specific signals. The heterodimer P150/p90 is probably the principal replicase for positive-strand genomic RNA and the 24S subgenomic RNA, which codes for structural proteins. Responsible for the mRNA-capping of the viral mRNAs. This function is necessary since all viral RNAs are synthesized in the cytoplasm, and host capping enzymes are restricted to the nucleus. Forms fibers late in the infection that may be involved in cell-to-cell spread of the virus RNA in the absence of virus particle formation.</text>
</comment>
<comment type="function">
    <molecule>RNA-directed RNA polymerase p90</molecule>
    <text evidence="2">Together with protease/methyltransferase p150, replicates the 40S genomic and antigenomic RNA by recognizing replications specific signals. The heterodimer P150/p90 is probably the principal replicase for positive-strand genomic RNA and the 24S subgenomic RNA, which codes for structural proteins. A helicase activity is probably also present.</text>
</comment>
<comment type="catalytic activity">
    <reaction evidence="2 4">
        <text>RNA(n) + a ribonucleoside 5'-triphosphate = RNA(n+1) + diphosphate</text>
        <dbReference type="Rhea" id="RHEA:21248"/>
        <dbReference type="Rhea" id="RHEA-COMP:14527"/>
        <dbReference type="Rhea" id="RHEA-COMP:17342"/>
        <dbReference type="ChEBI" id="CHEBI:33019"/>
        <dbReference type="ChEBI" id="CHEBI:61557"/>
        <dbReference type="ChEBI" id="CHEBI:140395"/>
        <dbReference type="EC" id="2.7.7.48"/>
    </reaction>
</comment>
<comment type="catalytic activity">
    <reaction evidence="2">
        <text>a ribonucleoside 5'-triphosphate + H2O = a ribonucleoside 5'-diphosphate + phosphate + H(+)</text>
        <dbReference type="Rhea" id="RHEA:23680"/>
        <dbReference type="ChEBI" id="CHEBI:15377"/>
        <dbReference type="ChEBI" id="CHEBI:15378"/>
        <dbReference type="ChEBI" id="CHEBI:43474"/>
        <dbReference type="ChEBI" id="CHEBI:57930"/>
        <dbReference type="ChEBI" id="CHEBI:61557"/>
        <dbReference type="EC" id="3.6.1.15"/>
    </reaction>
</comment>
<comment type="catalytic activity">
    <reaction evidence="2">
        <text>ATP + H2O = ADP + phosphate + H(+)</text>
        <dbReference type="Rhea" id="RHEA:13065"/>
        <dbReference type="ChEBI" id="CHEBI:15377"/>
        <dbReference type="ChEBI" id="CHEBI:15378"/>
        <dbReference type="ChEBI" id="CHEBI:30616"/>
        <dbReference type="ChEBI" id="CHEBI:43474"/>
        <dbReference type="ChEBI" id="CHEBI:456216"/>
        <dbReference type="EC" id="3.6.4.13"/>
    </reaction>
</comment>
<comment type="cofactor">
    <cofactor evidence="7">
        <name>Zn(2+)</name>
        <dbReference type="ChEBI" id="CHEBI:29105"/>
    </cofactor>
    <text evidence="7">Zn(2+) is necessary for the protease activity. The protease can also function efficiently with Cd(2+) and Co(2+).</text>
</comment>
<comment type="subunit">
    <molecule>Protease/methyltransferase p150</molecule>
    <text evidence="2">Interacts with RNA-directed RNA polymerase p90. Interacts with host CALM1; this interaction is necessary for the protease activity and viral infectivity. Interacts with host C1QBP. Interacts with the capsid protein.</text>
</comment>
<comment type="subunit">
    <molecule>RNA-directed RNA polymerase p90</molecule>
    <text evidence="2">Interacts with human RB1/retinoblastoma protein. Interacts with protease/methyltransferase p150.</text>
</comment>
<comment type="subcellular location">
    <molecule>Non-structural polyprotein p200</molecule>
    <subcellularLocation>
        <location evidence="2">Host membrane</location>
    </subcellularLocation>
    <subcellularLocation>
        <location evidence="2">Host cytoplasm</location>
        <location evidence="2">Host perinuclear region</location>
    </subcellularLocation>
    <subcellularLocation>
        <location evidence="2">Host cytoplasm</location>
    </subcellularLocation>
    <text evidence="2">Localizes to cytoplasmic foci at 24 hpi.</text>
</comment>
<comment type="subcellular location">
    <molecule>Protease/methyltransferase p150</molecule>
    <subcellularLocation>
        <location evidence="2">Host membrane</location>
    </subcellularLocation>
    <subcellularLocation>
        <location evidence="2">Host cytoplasm</location>
        <location evidence="2">Host perinuclear region</location>
    </subcellularLocation>
    <subcellularLocation>
        <location evidence="2">Host cytoplasm</location>
    </subcellularLocation>
    <text evidence="1 2">At 36 hpi, localizes to the host cytoplasm, probably in vesicles inside host vacuoles of endosomal and lysosomal origin (By similarity). At 72 hpi, localizes to filamentous structures in the host cytoplasm (By similarity).</text>
</comment>
<comment type="subcellular location">
    <molecule>RNA-directed RNA polymerase p90</molecule>
    <subcellularLocation>
        <location evidence="2">Host membrane</location>
    </subcellularLocation>
    <subcellularLocation>
        <location evidence="2">Host cytoplasm</location>
    </subcellularLocation>
    <text evidence="2">Localizes to the cytoplasm and to the cytoplasmic fibers formed by protease/methyltransferase p150.</text>
</comment>
<comment type="domain">
    <molecule>Protease/methyltransferase p150</molecule>
    <text evidence="2">The N-terminus has a methyltransferase activity for mRNA-capping. The C-terminus harbors a protease active in cis or in trans which specifically cleaves and releases the two mature proteins. Both the N-terminus and C-terminus are required for fiber formation. The N-terminus is involved in associating with membranes. An EF-hand Ca(2+)-binding motif is present in the protease. Also contains 3 SH3-binding motifs that are responsible for the interaction with host C1QBP.</text>
</comment>
<comment type="PTM">
    <molecule>Non-structural polyprotein p200</molecule>
    <text evidence="2">Specific enzymatic cleavage by its own cysteine protease yield mature proteins p150 and p90.</text>
</comment>
<comment type="miscellaneous">
    <text evidence="2">Rubella virus in utero infection has frequently severe consequences on normal fetal development, collectively known as congenital rubella syndrome (CRS). The teratogenicity of the virus is possibly due to the interaction between the p90 protein and the human RB1/retinoblastoma protein.</text>
</comment>
<feature type="chain" id="PRO_0000240161" description="Non-structural polyprotein p200">
    <location>
        <begin position="1"/>
        <end position="2116"/>
    </location>
</feature>
<feature type="chain" id="PRO_0000240162" description="Protease/methyltransferase p150">
    <location>
        <begin position="1"/>
        <end position="1301"/>
    </location>
</feature>
<feature type="chain" id="PRO_0000240163" description="RNA-directed RNA polymerase p90">
    <location>
        <begin position="1302"/>
        <end position="2116"/>
    </location>
</feature>
<feature type="domain" description="Alphavirus-like MT" evidence="6">
    <location>
        <begin position="57"/>
        <end position="247"/>
    </location>
</feature>
<feature type="domain" description="Macro" evidence="3">
    <location>
        <begin position="806"/>
        <end position="985"/>
    </location>
</feature>
<feature type="domain" description="Peptidase C27" evidence="7">
    <location>
        <begin position="1000"/>
        <end position="1301"/>
    </location>
</feature>
<feature type="domain" description="(+)RNA virus helicase ATP-binding" evidence="5">
    <location>
        <begin position="1320"/>
        <end position="1468"/>
    </location>
</feature>
<feature type="domain" description="(+)RNA virus helicase C-terminal" evidence="5">
    <location>
        <begin position="1469"/>
        <end position="1609"/>
    </location>
</feature>
<feature type="domain" description="RdRp catalytic" evidence="4">
    <location>
        <begin position="1870"/>
        <end position="1981"/>
    </location>
</feature>
<feature type="region of interest" description="Required for efficient proteolysis and P150-P90 interaction" evidence="2">
    <location>
        <begin position="36"/>
        <end position="49"/>
    </location>
</feature>
<feature type="region of interest" description="Disordered" evidence="8">
    <location>
        <begin position="715"/>
        <end position="805"/>
    </location>
</feature>
<feature type="region of interest" description="Disordered" evidence="8">
    <location>
        <begin position="992"/>
        <end position="1032"/>
    </location>
</feature>
<feature type="region of interest" description="Interaction with host CALM1" evidence="7">
    <location>
        <begin position="1152"/>
        <end position="1183"/>
    </location>
</feature>
<feature type="region of interest" description="EF-hand-like" evidence="7">
    <location>
        <begin position="1193"/>
        <end position="1228"/>
    </location>
</feature>
<feature type="region of interest" description="Involved in P150-P90 interaction" evidence="2">
    <location>
        <begin position="1700"/>
        <end position="1900"/>
    </location>
</feature>
<feature type="short sequence motif" description="PxxPxR; class II SH3-binding" evidence="2">
    <location>
        <begin position="727"/>
        <end position="732"/>
    </location>
</feature>
<feature type="short sequence motif" description="PxxPxR; class II SH3-binding" evidence="2">
    <location>
        <begin position="747"/>
        <end position="752"/>
    </location>
</feature>
<feature type="short sequence motif" description="PxxPxR; class II SH3-binding" evidence="2">
    <location>
        <begin position="761"/>
        <end position="766"/>
    </location>
</feature>
<feature type="short sequence motif" description="Human RB1 binding" evidence="2">
    <location>
        <begin position="1902"/>
        <end position="1906"/>
    </location>
</feature>
<feature type="compositionally biased region" description="Pro residues" evidence="8">
    <location>
        <begin position="721"/>
        <end position="730"/>
    </location>
</feature>
<feature type="compositionally biased region" description="Pro residues" evidence="8">
    <location>
        <begin position="744"/>
        <end position="764"/>
    </location>
</feature>
<feature type="active site" description="For cysteine protease activity" evidence="7">
    <location>
        <position position="1152"/>
    </location>
</feature>
<feature type="active site" description="For cysteine protease activity" evidence="7">
    <location>
        <position position="1273"/>
    </location>
</feature>
<feature type="binding site" evidence="7">
    <location>
        <position position="1175"/>
    </location>
    <ligand>
        <name>Zn(2+)</name>
        <dbReference type="ChEBI" id="CHEBI:29105"/>
    </ligand>
</feature>
<feature type="binding site" evidence="7">
    <location>
        <position position="1178"/>
    </location>
    <ligand>
        <name>Zn(2+)</name>
        <dbReference type="ChEBI" id="CHEBI:29105"/>
    </ligand>
</feature>
<feature type="binding site" evidence="7">
    <location>
        <position position="1227"/>
    </location>
    <ligand>
        <name>Zn(2+)</name>
        <dbReference type="ChEBI" id="CHEBI:29105"/>
    </ligand>
</feature>
<feature type="binding site" evidence="7">
    <location>
        <position position="1273"/>
    </location>
    <ligand>
        <name>Zn(2+)</name>
        <dbReference type="ChEBI" id="CHEBI:29105"/>
    </ligand>
</feature>
<feature type="binding site" evidence="5">
    <location>
        <begin position="1352"/>
        <end position="1359"/>
    </location>
    <ligand>
        <name>a ribonucleoside 5'-triphosphate</name>
        <dbReference type="ChEBI" id="CHEBI:61557"/>
    </ligand>
</feature>
<feature type="site" description="Cleavage; autocatalytic" evidence="7">
    <location>
        <begin position="1301"/>
        <end position="1302"/>
    </location>
</feature>
<sequence length="2116" mass="230696">MEKLLDEVLAPGGPYNLTVGSWVRDHVRSIVEGAWEVRDVVTAAQKRAIVAVIPRPVFTQMQVSDHPALHAISRYTRRHWIEWGPKEALHVLIDPSPGLLREVARVERRWVALCLHRTARKLATALAETAGEAWHADYVCALRGAPSGPFYVHPEDVPRGGRAVADRCLLYYTPMQMCELMRTIDATLLVAVDLWPVALAAHVGDDWDDLGIAWHLDHDGGCPADCRGAGAGPTPGYTRPCTTRIYQVLPDTAHPGRLYRCGPRLWTRDCAVAELSWEVAQHCGHQARVRAVRCTLPIRHVRSLQPSARVRLPDLVHLAEVGRWRWFSLPRPVFQRMLSYCKTLSPDAYYSERVFKFKNALSHSITLAGNVLQEGWKGTCAEEDALCAYVAFRAWQSNARLAGIMKGAKRCAADSLSVAGWLDTIWDAIKRFFGSVPLAERMEEWEQDAAVAAFDRGPLEDGGHHLDTVQPPKPLPRPEIAATWIVHAASADRHCACAPRCDVPRERPSAPAGPPDDEALIPPWLFAERRTLRCREWDFEALRARADTAATPAPLAPRPARYPTVLYRHPAHHGPWLTLDEPGEADAALVLCDPLGQPLRGPERHFAAGAHMCAQARGLQAFVRVVPPPERPWADGGARTWAKFFRGCAWAQRLLGEPAVMHLPYTDGDVPQLIALALRTLAQQGAALALSVRDLPGGAAFDANAVTAAVRADPGQLALTSPPPDNPPPPRRARRSQRHADARGPPPPAPVRDPPPLPPSPPAPRRAGDPASPISAEPADRARDAEPEVACEPGGPATPTRADPDSDIVESYARAAGPVHLRVRNIMDPPPGCKVVVNAANEGLLAGSGVCGAIFASAAATLAEDCRRLAPCPTGEAVATPGHGCGYTHIIHAVAPRRPQDPAALEQSEALLERAYRSVVALAAARRWACVACPLLGAGIYGWSAAESLRAALAAARTEPAERVSLHICHPDRATLMHASVLVGAGLAARRVSPPPTEPLASCPADDPGRSTQRTASPPAAPPGDAAAPESRGCQGCELCRYTRVTNDRAYVNLWLERDRGATGWAMRIPEVVVYGPEHLAAHFPLNHYSVLKPAEVRPPRGMCGSDMWRCRGWQGMPQVRCTPSNAHAALCRIGIPPRVSTRGDERDPNTCWLRAAANVAQAARACGAYTSAGCPKCAYGRALSEARTHEAFAALSQRWIASHADASLDGTGDPLDPLMETVGCACSRVWVGSEHEAPPDHLLVSLHRAPNGPWGVVLEVRARPEGGNPTGHFVCAVGGGPRRVSDRPHLWLAVPLSRGGGTCAATDEGLAQAYYDDLEVRRLGDDAMARAALASVQRPRKGPYNIKVWNMAAGAGKTTRILAAFTREDLYVCPTNALLHEIQAKLRARDIDIKNAATYERALTKPLAAYRRIYIDEAFTLGGEYCAFVASQTTAEVICVGDRDQCGPHYANNCRTPVPDRWPTERSRHTWRFPDCWAARLRAGLDYDVEGEHAGTFACNLWDGRQVDLHLAFSRETVRRLHEAGIRAYTVREAQGMSVGTACIHVGRDGTDVALALTRDLAIVSLTRASDALYLHELEDGSLRAAGLSAFLDAGALAELKEVPAGIDRVVAVEQAPPPLPPADGIPEAQDVPPFCPRTLEELVFGRAGHPHYADLNRVTEGEREVRYMRISRHLLNKNHTEMPGTERVLSAVCAVRRYRAGEDGSTLRTAVARQHPRPFRQIPPPRVTAGVAQEWRMTYLRERIDLTDVYTQMGVAARELTDRYARRYPEIFAGMCTAQSLSVPAFLKATLKCVDAALGPRDTEDCHAAQGKAGLEIRAWAKEWVQVMSPHFRAIQKIIMRALRPQFLVAAGHTEPEVDAWWQAHYTTNAIEVDFTEFDMNQTLATRDVELEISAALLGLPCAEDYRALRAGSYCTLRELGSTETGCERTSGEPATLLHNTTVAMCMAMRMVPKGVRWAGIFQGDDMVIFLPEGARSAALKWTPSEVGLFGFHIPVKHVSTPTPSFCGHVGTAAGLFHDVMHQAIKVLCRRFDPDVLEEQQVALLDRLRGVYAALPDTVAANAAYYDYSAERVLAIVRELTAYARGRGLDHPATIGALEEIQTPYARANLHDAD</sequence>
<organism>
    <name type="scientific">Rubella virus (strain BRD1)</name>
    <name type="common">RUBV</name>
    <dbReference type="NCBI Taxonomy" id="376262"/>
    <lineage>
        <taxon>Viruses</taxon>
        <taxon>Riboviria</taxon>
        <taxon>Orthornavirae</taxon>
        <taxon>Kitrinoviricota</taxon>
        <taxon>Alsuviricetes</taxon>
        <taxon>Hepelivirales</taxon>
        <taxon>Matonaviridae</taxon>
        <taxon>Rubivirus</taxon>
        <taxon>Rubivirus rubellae</taxon>
    </lineage>
</organism>